<reference key="1">
    <citation type="submission" date="2003-10" db="EMBL/GenBank/DDBJ databases">
        <authorList>
            <consortium name="NIH - Zebrafish Gene Collection (ZGC) project"/>
        </authorList>
    </citation>
    <scope>NUCLEOTIDE SEQUENCE [LARGE SCALE MRNA]</scope>
    <source>
        <tissue>Eye</tissue>
    </source>
</reference>
<name>CSN5_DANRE</name>
<protein>
    <recommendedName>
        <fullName>COP9 signalosome complex subunit 5</fullName>
        <shortName>Signalosome subunit 5</shortName>
        <ecNumber>3.4.-.-</ecNumber>
    </recommendedName>
</protein>
<comment type="function">
    <text evidence="2">Probable protease subunit of the COP9 signalosome complex (CSN), a complex involved in various cellular and developmental processes. The CSN complex is an essential regulator of the ubiquitin (Ubl) conjugation pathway by mediating the deneddylation of the cullin subunits of E3 ligase complexes, leading to modify the Ubl ligase activity. In the complex, it probably acts as the catalytic center that mediates the cleavage of nedd8 from cullins. It however has no metalloprotease activity by itself and requires the other subunits of the CSN complex.</text>
</comment>
<comment type="cofactor">
    <cofactor evidence="1">
        <name>a divalent metal cation</name>
        <dbReference type="ChEBI" id="CHEBI:60240"/>
    </cofactor>
</comment>
<comment type="subunit">
    <text evidence="2">Component of the CSN complex, probably composed of cops1, cops2, cops3, cops4, cops5, cops6, cops7, cops8 and cops9.</text>
</comment>
<comment type="subcellular location">
    <subcellularLocation>
        <location evidence="2">Cytoplasm</location>
        <location evidence="2">Cytosol</location>
    </subcellularLocation>
    <subcellularLocation>
        <location evidence="2">Nucleus</location>
    </subcellularLocation>
    <subcellularLocation>
        <location evidence="2">Cytoplasm</location>
        <location evidence="2">Perinuclear region</location>
    </subcellularLocation>
    <subcellularLocation>
        <location evidence="2">Cytoplasmic vesicle</location>
        <location evidence="2">Secretory vesicle</location>
        <location evidence="2">Synaptic vesicle</location>
    </subcellularLocation>
</comment>
<comment type="domain">
    <text evidence="1">The JAMM motif is essential for the protease activity of the CSN complex resulting in deneddylation of cullins. It constitutes the catalytic center of the complex (By similarity).</text>
</comment>
<comment type="miscellaneous">
    <text evidence="1">The CSN complex is associated with some 'Lys-63'-specific deubiquitination. Such activity is however not mediated by the core CSN complex but by the brcc3/brcc36 component of the BRISC complex (By similarity).</text>
</comment>
<comment type="similarity">
    <text evidence="4">Belongs to the peptidase M67A family. CSN5 subfamily.</text>
</comment>
<evidence type="ECO:0000250" key="1"/>
<evidence type="ECO:0000250" key="2">
    <source>
        <dbReference type="UniProtKB" id="Q92905"/>
    </source>
</evidence>
<evidence type="ECO:0000255" key="3">
    <source>
        <dbReference type="PROSITE-ProRule" id="PRU01182"/>
    </source>
</evidence>
<evidence type="ECO:0000305" key="4"/>
<accession>Q6PC30</accession>
<keyword id="KW-0963">Cytoplasm</keyword>
<keyword id="KW-0968">Cytoplasmic vesicle</keyword>
<keyword id="KW-0378">Hydrolase</keyword>
<keyword id="KW-0479">Metal-binding</keyword>
<keyword id="KW-0482">Metalloprotease</keyword>
<keyword id="KW-0539">Nucleus</keyword>
<keyword id="KW-0645">Protease</keyword>
<keyword id="KW-1185">Reference proteome</keyword>
<keyword id="KW-0736">Signalosome</keyword>
<keyword id="KW-0770">Synapse</keyword>
<keyword id="KW-0862">Zinc</keyword>
<gene>
    <name type="primary">cops5</name>
    <name type="ORF">zgc:73130</name>
</gene>
<proteinExistence type="evidence at transcript level"/>
<organism>
    <name type="scientific">Danio rerio</name>
    <name type="common">Zebrafish</name>
    <name type="synonym">Brachydanio rerio</name>
    <dbReference type="NCBI Taxonomy" id="7955"/>
    <lineage>
        <taxon>Eukaryota</taxon>
        <taxon>Metazoa</taxon>
        <taxon>Chordata</taxon>
        <taxon>Craniata</taxon>
        <taxon>Vertebrata</taxon>
        <taxon>Euteleostomi</taxon>
        <taxon>Actinopterygii</taxon>
        <taxon>Neopterygii</taxon>
        <taxon>Teleostei</taxon>
        <taxon>Ostariophysi</taxon>
        <taxon>Cypriniformes</taxon>
        <taxon>Danionidae</taxon>
        <taxon>Danioninae</taxon>
        <taxon>Danio</taxon>
    </lineage>
</organism>
<dbReference type="EC" id="3.4.-.-"/>
<dbReference type="EMBL" id="BC059493">
    <property type="protein sequence ID" value="AAH59493.1"/>
    <property type="molecule type" value="mRNA"/>
</dbReference>
<dbReference type="RefSeq" id="NP_957019.1">
    <property type="nucleotide sequence ID" value="NM_200725.1"/>
</dbReference>
<dbReference type="SMR" id="Q6PC30"/>
<dbReference type="FunCoup" id="Q6PC30">
    <property type="interactions" value="3063"/>
</dbReference>
<dbReference type="STRING" id="7955.ENSDARP00000074782"/>
<dbReference type="MEROPS" id="M67.A13"/>
<dbReference type="PaxDb" id="7955-ENSDARP00000074782"/>
<dbReference type="Ensembl" id="ENSDART00000080332">
    <property type="protein sequence ID" value="ENSDARP00000074782"/>
    <property type="gene ID" value="ENSDARG00000057624"/>
</dbReference>
<dbReference type="GeneID" id="393698"/>
<dbReference type="KEGG" id="dre:393698"/>
<dbReference type="AGR" id="ZFIN:ZDB-GENE-040426-1686"/>
<dbReference type="CTD" id="10987"/>
<dbReference type="ZFIN" id="ZDB-GENE-040426-1686">
    <property type="gene designation" value="cops5"/>
</dbReference>
<dbReference type="eggNOG" id="KOG1554">
    <property type="taxonomic scope" value="Eukaryota"/>
</dbReference>
<dbReference type="HOGENOM" id="CLU_053034_0_1_1"/>
<dbReference type="InParanoid" id="Q6PC30"/>
<dbReference type="OMA" id="VKMKLFQ"/>
<dbReference type="OrthoDB" id="10266268at2759"/>
<dbReference type="PhylomeDB" id="Q6PC30"/>
<dbReference type="TreeFam" id="TF105601"/>
<dbReference type="Reactome" id="R-DRE-8856825">
    <property type="pathway name" value="Cargo recognition for clathrin-mediated endocytosis"/>
</dbReference>
<dbReference type="Reactome" id="R-DRE-8951664">
    <property type="pathway name" value="Neddylation"/>
</dbReference>
<dbReference type="PRO" id="PR:Q6PC30"/>
<dbReference type="Proteomes" id="UP000000437">
    <property type="component" value="Chromosome 24"/>
</dbReference>
<dbReference type="Bgee" id="ENSDARG00000057624">
    <property type="expression patterns" value="Expressed in testis and 29 other cell types or tissues"/>
</dbReference>
<dbReference type="GO" id="GO:0008180">
    <property type="term" value="C:COP9 signalosome"/>
    <property type="evidence" value="ECO:0000318"/>
    <property type="project" value="GO_Central"/>
</dbReference>
<dbReference type="GO" id="GO:0005737">
    <property type="term" value="C:cytoplasm"/>
    <property type="evidence" value="ECO:0000318"/>
    <property type="project" value="GO_Central"/>
</dbReference>
<dbReference type="GO" id="GO:0005829">
    <property type="term" value="C:cytosol"/>
    <property type="evidence" value="ECO:0000250"/>
    <property type="project" value="UniProtKB"/>
</dbReference>
<dbReference type="GO" id="GO:0005634">
    <property type="term" value="C:nucleus"/>
    <property type="evidence" value="ECO:0000250"/>
    <property type="project" value="UniProtKB"/>
</dbReference>
<dbReference type="GO" id="GO:0048471">
    <property type="term" value="C:perinuclear region of cytoplasm"/>
    <property type="evidence" value="ECO:0007669"/>
    <property type="project" value="UniProtKB-SubCell"/>
</dbReference>
<dbReference type="GO" id="GO:0008021">
    <property type="term" value="C:synaptic vesicle"/>
    <property type="evidence" value="ECO:0007669"/>
    <property type="project" value="UniProtKB-SubCell"/>
</dbReference>
<dbReference type="GO" id="GO:0019784">
    <property type="term" value="F:deNEDDylase activity"/>
    <property type="evidence" value="ECO:0000318"/>
    <property type="project" value="GO_Central"/>
</dbReference>
<dbReference type="GO" id="GO:0046872">
    <property type="term" value="F:metal ion binding"/>
    <property type="evidence" value="ECO:0007669"/>
    <property type="project" value="UniProtKB-KW"/>
</dbReference>
<dbReference type="GO" id="GO:0008237">
    <property type="term" value="F:metallopeptidase activity"/>
    <property type="evidence" value="ECO:0000318"/>
    <property type="project" value="GO_Central"/>
</dbReference>
<dbReference type="GO" id="GO:0043066">
    <property type="term" value="P:negative regulation of apoptotic process"/>
    <property type="evidence" value="ECO:0000250"/>
    <property type="project" value="UniProtKB"/>
</dbReference>
<dbReference type="GO" id="GO:0051091">
    <property type="term" value="P:positive regulation of DNA-binding transcription factor activity"/>
    <property type="evidence" value="ECO:0000250"/>
    <property type="project" value="UniProtKB"/>
</dbReference>
<dbReference type="GO" id="GO:0006508">
    <property type="term" value="P:proteolysis"/>
    <property type="evidence" value="ECO:0007669"/>
    <property type="project" value="UniProtKB-KW"/>
</dbReference>
<dbReference type="GO" id="GO:0051726">
    <property type="term" value="P:regulation of cell cycle"/>
    <property type="evidence" value="ECO:0000318"/>
    <property type="project" value="GO_Central"/>
</dbReference>
<dbReference type="GO" id="GO:0060118">
    <property type="term" value="P:vestibular receptor cell development"/>
    <property type="evidence" value="ECO:0000315"/>
    <property type="project" value="ZFIN"/>
</dbReference>
<dbReference type="CDD" id="cd08069">
    <property type="entry name" value="MPN_RPN11_CSN5"/>
    <property type="match status" value="1"/>
</dbReference>
<dbReference type="FunFam" id="3.40.140.10:FF:000203">
    <property type="entry name" value="COP9 signalosome complex subunit 5"/>
    <property type="match status" value="1"/>
</dbReference>
<dbReference type="Gene3D" id="3.40.140.10">
    <property type="entry name" value="Cytidine Deaminase, domain 2"/>
    <property type="match status" value="1"/>
</dbReference>
<dbReference type="InterPro" id="IPR040961">
    <property type="entry name" value="CSN5_C"/>
</dbReference>
<dbReference type="InterPro" id="IPR000555">
    <property type="entry name" value="JAMM/MPN+_dom"/>
</dbReference>
<dbReference type="InterPro" id="IPR050242">
    <property type="entry name" value="JAMM_MPN+_peptidase_M67A"/>
</dbReference>
<dbReference type="InterPro" id="IPR037518">
    <property type="entry name" value="MPN"/>
</dbReference>
<dbReference type="PANTHER" id="PTHR10410">
    <property type="entry name" value="EUKARYOTIC TRANSLATION INITIATION FACTOR 3 -RELATED"/>
    <property type="match status" value="1"/>
</dbReference>
<dbReference type="Pfam" id="PF18323">
    <property type="entry name" value="CSN5_C"/>
    <property type="match status" value="1"/>
</dbReference>
<dbReference type="Pfam" id="PF01398">
    <property type="entry name" value="JAB"/>
    <property type="match status" value="1"/>
</dbReference>
<dbReference type="SMART" id="SM00232">
    <property type="entry name" value="JAB_MPN"/>
    <property type="match status" value="1"/>
</dbReference>
<dbReference type="SUPFAM" id="SSF102712">
    <property type="entry name" value="JAB1/MPN domain"/>
    <property type="match status" value="1"/>
</dbReference>
<dbReference type="PROSITE" id="PS50249">
    <property type="entry name" value="MPN"/>
    <property type="match status" value="1"/>
</dbReference>
<sequence>MAGSSIAMKTWELSNSMQEVQSIDEIYKYDKKQQQEILAAKPWTKDHHYFKYCKLSALALLKMVMHARSGGNLEVMGLMLGKVDGETMIIMDSFALPVEGTETRVNAQAAAYEYMAAYIENAKQVGRLENAIGWYHSHPGYGCWLSGIDVSTQMLNQQFQEPFVAVVIDPTRTISAGKVNLGAFRTYPKGYKPPDEGPSEYQTIPLNKIEDFGVHCKQYYALEVSYFKSSLDRKLLELLWNKYWVNTLSSSSLLTNADYTTGQVFDLSEKLEQAEAQLGRGSFMLGLDTHDRKSEDKLAKATRDSCKTTIEAIHGLMSQVIKDKLFNQVNTSAN</sequence>
<feature type="chain" id="PRO_0000194837" description="COP9 signalosome complex subunit 5">
    <location>
        <begin position="1"/>
        <end position="334"/>
    </location>
</feature>
<feature type="domain" description="MPN" evidence="3">
    <location>
        <begin position="53"/>
        <end position="190"/>
    </location>
</feature>
<feature type="short sequence motif" description="JAMM motif" evidence="3">
    <location>
        <begin position="136"/>
        <end position="149"/>
    </location>
</feature>
<feature type="binding site" evidence="3">
    <location>
        <position position="136"/>
    </location>
    <ligand>
        <name>Zn(2+)</name>
        <dbReference type="ChEBI" id="CHEBI:29105"/>
        <note>catalytic</note>
    </ligand>
</feature>
<feature type="binding site" evidence="3">
    <location>
        <position position="138"/>
    </location>
    <ligand>
        <name>Zn(2+)</name>
        <dbReference type="ChEBI" id="CHEBI:29105"/>
        <note>catalytic</note>
    </ligand>
</feature>
<feature type="binding site" evidence="3">
    <location>
        <position position="149"/>
    </location>
    <ligand>
        <name>Zn(2+)</name>
        <dbReference type="ChEBI" id="CHEBI:29105"/>
        <note>catalytic</note>
    </ligand>
</feature>